<gene>
    <name type="primary">ADRB2</name>
</gene>
<evidence type="ECO:0000250" key="1"/>
<evidence type="ECO:0000250" key="2">
    <source>
        <dbReference type="UniProtKB" id="P07550"/>
    </source>
</evidence>
<evidence type="ECO:0000255" key="3"/>
<evidence type="ECO:0000255" key="4">
    <source>
        <dbReference type="PROSITE-ProRule" id="PRU00521"/>
    </source>
</evidence>
<evidence type="ECO:0000256" key="5">
    <source>
        <dbReference type="SAM" id="MobiDB-lite"/>
    </source>
</evidence>
<evidence type="ECO:0000269" key="6">
    <source>
    </source>
</evidence>
<evidence type="ECO:0000305" key="7"/>
<feature type="chain" id="PRO_0000069127" description="Beta-2 adrenergic receptor">
    <location>
        <begin position="1"/>
        <end position="418"/>
    </location>
</feature>
<feature type="topological domain" description="Extracellular" evidence="1">
    <location>
        <begin position="1"/>
        <end position="34"/>
    </location>
</feature>
<feature type="transmembrane region" description="Helical; Name=1" evidence="1">
    <location>
        <begin position="35"/>
        <end position="58"/>
    </location>
</feature>
<feature type="topological domain" description="Cytoplasmic" evidence="1">
    <location>
        <begin position="59"/>
        <end position="71"/>
    </location>
</feature>
<feature type="transmembrane region" description="Helical; Name=2" evidence="1">
    <location>
        <begin position="72"/>
        <end position="95"/>
    </location>
</feature>
<feature type="topological domain" description="Extracellular" evidence="1">
    <location>
        <begin position="96"/>
        <end position="106"/>
    </location>
</feature>
<feature type="transmembrane region" description="Helical; Name=3" evidence="1">
    <location>
        <begin position="107"/>
        <end position="129"/>
    </location>
</feature>
<feature type="topological domain" description="Cytoplasmic" evidence="1">
    <location>
        <begin position="130"/>
        <end position="150"/>
    </location>
</feature>
<feature type="transmembrane region" description="Helical; Name=4" evidence="1">
    <location>
        <begin position="151"/>
        <end position="174"/>
    </location>
</feature>
<feature type="topological domain" description="Extracellular" evidence="1">
    <location>
        <begin position="175"/>
        <end position="196"/>
    </location>
</feature>
<feature type="transmembrane region" description="Helical; Name=5" evidence="1">
    <location>
        <begin position="197"/>
        <end position="220"/>
    </location>
</feature>
<feature type="topological domain" description="Cytoplasmic" evidence="1">
    <location>
        <begin position="221"/>
        <end position="274"/>
    </location>
</feature>
<feature type="transmembrane region" description="Helical; Name=6" evidence="1">
    <location>
        <begin position="275"/>
        <end position="298"/>
    </location>
</feature>
<feature type="topological domain" description="Extracellular" evidence="1">
    <location>
        <begin position="299"/>
        <end position="305"/>
    </location>
</feature>
<feature type="transmembrane region" description="Helical; Name=7" evidence="1">
    <location>
        <begin position="306"/>
        <end position="329"/>
    </location>
</feature>
<feature type="topological domain" description="Cytoplasmic" evidence="1">
    <location>
        <begin position="330"/>
        <end position="418"/>
    </location>
</feature>
<feature type="region of interest" description="Disordered" evidence="5">
    <location>
        <begin position="398"/>
        <end position="418"/>
    </location>
</feature>
<feature type="short sequence motif" description="PDZ-binding">
    <location>
        <begin position="415"/>
        <end position="418"/>
    </location>
</feature>
<feature type="modified residue" description="Phosphotyrosine" evidence="2">
    <location>
        <position position="141"/>
    </location>
</feature>
<feature type="modified residue" description="Phosphoserine" evidence="2">
    <location>
        <position position="246"/>
    </location>
</feature>
<feature type="modified residue" description="Phosphothreonine; by PKA" evidence="3">
    <location>
        <position position="261"/>
    </location>
</feature>
<feature type="modified residue" description="Phosphoserine; by PKA" evidence="3">
    <location>
        <position position="262"/>
    </location>
</feature>
<feature type="modified residue" description="Phosphoserine; by PKA" evidence="2">
    <location>
        <position position="345"/>
    </location>
</feature>
<feature type="modified residue" description="Phosphoserine; by PKA" evidence="2">
    <location>
        <position position="346"/>
    </location>
</feature>
<feature type="modified residue" description="Phosphoserine; by BARK" evidence="7">
    <location>
        <position position="355"/>
    </location>
</feature>
<feature type="modified residue" description="Phosphoserine; by BARK" evidence="7">
    <location>
        <position position="356"/>
    </location>
</feature>
<feature type="modified residue" description="4-hydroxyproline" evidence="1">
    <location>
        <position position="387"/>
    </location>
</feature>
<feature type="modified residue" description="4-hydroxyproline" evidence="1">
    <location>
        <position position="400"/>
    </location>
</feature>
<feature type="lipid moiety-binding region" description="S-palmitoyl cysteine" evidence="2">
    <location>
        <position position="341"/>
    </location>
</feature>
<feature type="glycosylation site" description="N-linked (GlcNAc...) asparagine" evidence="3">
    <location>
        <position position="6"/>
    </location>
</feature>
<feature type="glycosylation site" description="N-linked (GlcNAc...) asparagine" evidence="3">
    <location>
        <position position="15"/>
    </location>
</feature>
<feature type="glycosylation site" description="N-linked (GlcNAc...) asparagine" evidence="3">
    <location>
        <position position="23"/>
    </location>
</feature>
<feature type="disulfide bond" evidence="4">
    <location>
        <begin position="106"/>
        <end position="191"/>
    </location>
</feature>
<feature type="disulfide bond" evidence="4">
    <location>
        <begin position="184"/>
        <end position="190"/>
    </location>
</feature>
<feature type="sequence conflict" description="In Ref. 3; CAA47653." evidence="7" ref="3">
    <original>S</original>
    <variation>T</variation>
    <location>
        <position position="254"/>
    </location>
</feature>
<feature type="sequence conflict" description="In Ref. 3; CAA47653." evidence="7" ref="3">
    <original>L</original>
    <variation>P</variation>
    <location>
        <position position="272"/>
    </location>
</feature>
<reference key="1">
    <citation type="journal article" date="1999" name="Endocrinology">
        <title>Characterization and localization of beta2-adrenergic receptors in the bovine oviduct: indication for progesterone-mediated expression.</title>
        <authorList>
            <person name="Einspanier R."/>
            <person name="Gabler C."/>
            <person name="Kettler A."/>
            <person name="Kloas W."/>
        </authorList>
    </citation>
    <scope>NUCLEOTIDE SEQUENCE [MRNA]</scope>
    <scope>TISSUE SPECIFICITY</scope>
    <scope>INDUCTION</scope>
    <source>
        <strain>Fleckvieh</strain>
        <tissue>Oviduct</tissue>
    </source>
</reference>
<reference key="2">
    <citation type="submission" date="2006-02" db="EMBL/GenBank/DDBJ databases">
        <authorList>
            <consortium name="NIH - Mammalian Gene Collection (MGC) project"/>
        </authorList>
    </citation>
    <scope>NUCLEOTIDE SEQUENCE [LARGE SCALE MRNA]</scope>
    <source>
        <strain>Hereford</strain>
        <tissue>Hypothalamus</tissue>
    </source>
</reference>
<reference key="3">
    <citation type="submission" date="1993-01" db="EMBL/GenBank/DDBJ databases">
        <authorList>
            <person name="Stoffel B."/>
            <person name="Hagen-Mann K."/>
            <person name="Mann W."/>
            <person name="Meyer H.H.D."/>
        </authorList>
    </citation>
    <scope>NUCLEOTIDE SEQUENCE [MRNA] OF 253-377</scope>
</reference>
<protein>
    <recommendedName>
        <fullName>Beta-2 adrenergic receptor</fullName>
    </recommendedName>
    <alternativeName>
        <fullName>Beta-2 adrenoreceptor</fullName>
        <shortName>Beta-2 adrenoceptor</shortName>
    </alternativeName>
</protein>
<accession>Q28044</accession>
<accession>Q29RK5</accession>
<sequence length="418" mass="47136">MGQPGNRSVFLLAPNASHAPDQNVTLERDEAWVVGMGILMSLIVLAIVFGNVLVITAIAKFERLQTVTNYFITSLACADLVMGLAVVPFGACHILMKMWTFGNFWCEFWTSIDVLCVTASIETLCVIAVDRYLAITSPFKYQCLLTKNKARVVILMVWIVSGLTSFLPIQMHWYRASHKEAINCYAKETCCDFFTNQPYAIASSIVSFYLPLVVMVFVYSRVFQVAKRQLQKIDKSEGRFHAQNVSQVEQDGRSGLGQRRTSKFYLKEHKALKTLGIIMGTFTLCWLPFFIVNIVHVIKDNLIRKEIYILLNWLGYINSAFNPLIYCRSPDFRIAFQELLCLRRSSLKAYGNGCSSNSNDRTDYTGEQSGYHLGEEKDSELLCEDPPGTENFVNQQGTVPSDSIDSQGRNCSTNDSLL</sequence>
<dbReference type="EMBL" id="Z86037">
    <property type="protein sequence ID" value="CAB06661.1"/>
    <property type="molecule type" value="mRNA"/>
</dbReference>
<dbReference type="EMBL" id="BC114132">
    <property type="protein sequence ID" value="AAI14133.1"/>
    <property type="molecule type" value="mRNA"/>
</dbReference>
<dbReference type="EMBL" id="X67213">
    <property type="protein sequence ID" value="CAA47653.1"/>
    <property type="molecule type" value="mRNA"/>
</dbReference>
<dbReference type="PIR" id="S31617">
    <property type="entry name" value="S31617"/>
</dbReference>
<dbReference type="RefSeq" id="NP_776656.1">
    <property type="nucleotide sequence ID" value="NM_174231.1"/>
</dbReference>
<dbReference type="SMR" id="Q28044"/>
<dbReference type="FunCoup" id="Q28044">
    <property type="interactions" value="146"/>
</dbReference>
<dbReference type="STRING" id="9913.ENSBTAP00000002779"/>
<dbReference type="BindingDB" id="Q28044"/>
<dbReference type="ChEMBL" id="CHEMBL3373"/>
<dbReference type="DrugCentral" id="Q28044"/>
<dbReference type="GlyCosmos" id="Q28044">
    <property type="glycosylation" value="3 sites, No reported glycans"/>
</dbReference>
<dbReference type="GlyGen" id="Q28044">
    <property type="glycosylation" value="3 sites"/>
</dbReference>
<dbReference type="PaxDb" id="9913-ENSBTAP00000002779"/>
<dbReference type="Ensembl" id="ENSBTAT00000002779.6">
    <property type="protein sequence ID" value="ENSBTAP00000002779.4"/>
    <property type="gene ID" value="ENSBTAG00000002144.6"/>
</dbReference>
<dbReference type="Ensembl" id="ENSBTAT00000090704.1">
    <property type="protein sequence ID" value="ENSBTAP00000083621.1"/>
    <property type="gene ID" value="ENSBTAG00000002144.6"/>
</dbReference>
<dbReference type="Ensembl" id="ENSBTAT00000097281.1">
    <property type="protein sequence ID" value="ENSBTAP00000084724.1"/>
    <property type="gene ID" value="ENSBTAG00000002144.6"/>
</dbReference>
<dbReference type="Ensembl" id="ENSBTAT00000098415.1">
    <property type="protein sequence ID" value="ENSBTAP00000080036.1"/>
    <property type="gene ID" value="ENSBTAG00000002144.6"/>
</dbReference>
<dbReference type="Ensembl" id="ENSBTAT00000121738.1">
    <property type="protein sequence ID" value="ENSBTAP00000079571.1"/>
    <property type="gene ID" value="ENSBTAG00000002144.6"/>
</dbReference>
<dbReference type="Ensembl" id="ENSBTAT00000128200.1">
    <property type="protein sequence ID" value="ENSBTAP00000084769.1"/>
    <property type="gene ID" value="ENSBTAG00000002144.6"/>
</dbReference>
<dbReference type="Ensembl" id="ENSBTAT00000128597.1">
    <property type="protein sequence ID" value="ENSBTAP00000082539.1"/>
    <property type="gene ID" value="ENSBTAG00000002144.6"/>
</dbReference>
<dbReference type="GeneID" id="281605"/>
<dbReference type="KEGG" id="bta:281605"/>
<dbReference type="CTD" id="154"/>
<dbReference type="VEuPathDB" id="HostDB:ENSBTAG00000002144"/>
<dbReference type="VGNC" id="VGNC:25697">
    <property type="gene designation" value="ADRB2"/>
</dbReference>
<dbReference type="eggNOG" id="KOG3656">
    <property type="taxonomic scope" value="Eukaryota"/>
</dbReference>
<dbReference type="GeneTree" id="ENSGT00940000159538"/>
<dbReference type="HOGENOM" id="CLU_009579_11_0_1"/>
<dbReference type="InParanoid" id="Q28044"/>
<dbReference type="OMA" id="CEFWISI"/>
<dbReference type="OrthoDB" id="5975661at2759"/>
<dbReference type="TreeFam" id="TF316350"/>
<dbReference type="Reactome" id="R-BTA-390696">
    <property type="pathway name" value="Adrenoceptors"/>
</dbReference>
<dbReference type="Reactome" id="R-BTA-418555">
    <property type="pathway name" value="G alpha (s) signalling events"/>
</dbReference>
<dbReference type="Reactome" id="R-BTA-5689880">
    <property type="pathway name" value="Ub-specific processing proteases"/>
</dbReference>
<dbReference type="Reactome" id="R-BTA-8856825">
    <property type="pathway name" value="Cargo recognition for clathrin-mediated endocytosis"/>
</dbReference>
<dbReference type="Reactome" id="R-BTA-8856828">
    <property type="pathway name" value="Clathrin-mediated endocytosis"/>
</dbReference>
<dbReference type="PRO" id="PR:Q28044"/>
<dbReference type="Proteomes" id="UP000009136">
    <property type="component" value="Chromosome 7"/>
</dbReference>
<dbReference type="Bgee" id="ENSBTAG00000002144">
    <property type="expression patterns" value="Expressed in gluteus medius and 100 other cell types or tissues"/>
</dbReference>
<dbReference type="GO" id="GO:0016324">
    <property type="term" value="C:apical plasma membrane"/>
    <property type="evidence" value="ECO:0007669"/>
    <property type="project" value="Ensembl"/>
</dbReference>
<dbReference type="GO" id="GO:0036064">
    <property type="term" value="C:ciliary basal body"/>
    <property type="evidence" value="ECO:0007669"/>
    <property type="project" value="Ensembl"/>
</dbReference>
<dbReference type="GO" id="GO:0005769">
    <property type="term" value="C:early endosome"/>
    <property type="evidence" value="ECO:0007669"/>
    <property type="project" value="UniProtKB-SubCell"/>
</dbReference>
<dbReference type="GO" id="GO:0005794">
    <property type="term" value="C:Golgi apparatus"/>
    <property type="evidence" value="ECO:0007669"/>
    <property type="project" value="UniProtKB-SubCell"/>
</dbReference>
<dbReference type="GO" id="GO:0045171">
    <property type="term" value="C:intercellular bridge"/>
    <property type="evidence" value="ECO:0007669"/>
    <property type="project" value="Ensembl"/>
</dbReference>
<dbReference type="GO" id="GO:0072686">
    <property type="term" value="C:mitotic spindle"/>
    <property type="evidence" value="ECO:0007669"/>
    <property type="project" value="Ensembl"/>
</dbReference>
<dbReference type="GO" id="GO:0098992">
    <property type="term" value="C:neuronal dense core vesicle"/>
    <property type="evidence" value="ECO:0007669"/>
    <property type="project" value="Ensembl"/>
</dbReference>
<dbReference type="GO" id="GO:0005634">
    <property type="term" value="C:nucleus"/>
    <property type="evidence" value="ECO:0007669"/>
    <property type="project" value="Ensembl"/>
</dbReference>
<dbReference type="GO" id="GO:0005886">
    <property type="term" value="C:plasma membrane"/>
    <property type="evidence" value="ECO:0000318"/>
    <property type="project" value="GO_Central"/>
</dbReference>
<dbReference type="GO" id="GO:0043235">
    <property type="term" value="C:receptor complex"/>
    <property type="evidence" value="ECO:0000250"/>
    <property type="project" value="HGNC-UCL"/>
</dbReference>
<dbReference type="GO" id="GO:0008179">
    <property type="term" value="F:adenylate cyclase binding"/>
    <property type="evidence" value="ECO:0007669"/>
    <property type="project" value="Ensembl"/>
</dbReference>
<dbReference type="GO" id="GO:0001540">
    <property type="term" value="F:amyloid-beta binding"/>
    <property type="evidence" value="ECO:0007669"/>
    <property type="project" value="Ensembl"/>
</dbReference>
<dbReference type="GO" id="GO:0004941">
    <property type="term" value="F:beta2-adrenergic receptor activity"/>
    <property type="evidence" value="ECO:0000250"/>
    <property type="project" value="HGNC-UCL"/>
</dbReference>
<dbReference type="GO" id="GO:0051380">
    <property type="term" value="F:norepinephrine binding"/>
    <property type="evidence" value="ECO:0000250"/>
    <property type="project" value="HGNC-UCL"/>
</dbReference>
<dbReference type="GO" id="GO:0015459">
    <property type="term" value="F:potassium channel regulator activity"/>
    <property type="evidence" value="ECO:0007669"/>
    <property type="project" value="Ensembl"/>
</dbReference>
<dbReference type="GO" id="GO:0042803">
    <property type="term" value="F:protein homodimerization activity"/>
    <property type="evidence" value="ECO:0000250"/>
    <property type="project" value="HGNC-UCL"/>
</dbReference>
<dbReference type="GO" id="GO:0044877">
    <property type="term" value="F:protein-containing complex binding"/>
    <property type="evidence" value="ECO:0007669"/>
    <property type="project" value="Ensembl"/>
</dbReference>
<dbReference type="GO" id="GO:0071880">
    <property type="term" value="P:adenylate cyclase-activating adrenergic receptor signaling pathway"/>
    <property type="evidence" value="ECO:0000250"/>
    <property type="project" value="HGNC-UCL"/>
</dbReference>
<dbReference type="GO" id="GO:0098990">
    <property type="term" value="P:AMPA selective glutamate receptor signaling pathway"/>
    <property type="evidence" value="ECO:0007669"/>
    <property type="project" value="Ensembl"/>
</dbReference>
<dbReference type="GO" id="GO:0045453">
    <property type="term" value="P:bone resorption"/>
    <property type="evidence" value="ECO:0007669"/>
    <property type="project" value="Ensembl"/>
</dbReference>
<dbReference type="GO" id="GO:0050873">
    <property type="term" value="P:brown fat cell differentiation"/>
    <property type="evidence" value="ECO:0007669"/>
    <property type="project" value="Ensembl"/>
</dbReference>
<dbReference type="GO" id="GO:1904646">
    <property type="term" value="P:cellular response to amyloid-beta"/>
    <property type="evidence" value="ECO:0007669"/>
    <property type="project" value="Ensembl"/>
</dbReference>
<dbReference type="GO" id="GO:0002024">
    <property type="term" value="P:diet induced thermogenesis"/>
    <property type="evidence" value="ECO:0007669"/>
    <property type="project" value="Ensembl"/>
</dbReference>
<dbReference type="GO" id="GO:0031649">
    <property type="term" value="P:heat generation"/>
    <property type="evidence" value="ECO:0007669"/>
    <property type="project" value="Ensembl"/>
</dbReference>
<dbReference type="GO" id="GO:0045744">
    <property type="term" value="P:negative regulation of G protein-coupled receptor signaling pathway"/>
    <property type="evidence" value="ECO:0000250"/>
    <property type="project" value="HGNC-UCL"/>
</dbReference>
<dbReference type="GO" id="GO:0040015">
    <property type="term" value="P:negative regulation of multicellular organism growth"/>
    <property type="evidence" value="ECO:0007669"/>
    <property type="project" value="Ensembl"/>
</dbReference>
<dbReference type="GO" id="GO:0045986">
    <property type="term" value="P:negative regulation of smooth muscle contraction"/>
    <property type="evidence" value="ECO:0007669"/>
    <property type="project" value="Ensembl"/>
</dbReference>
<dbReference type="GO" id="GO:0002025">
    <property type="term" value="P:norepinephrine-epinephrine-mediated vasodilation involved in regulation of systemic arterial blood pressure"/>
    <property type="evidence" value="ECO:0000318"/>
    <property type="project" value="GO_Central"/>
</dbReference>
<dbReference type="GO" id="GO:1901098">
    <property type="term" value="P:positive regulation of autophagosome maturation"/>
    <property type="evidence" value="ECO:0000250"/>
    <property type="project" value="GO_Central"/>
</dbReference>
<dbReference type="GO" id="GO:0030501">
    <property type="term" value="P:positive regulation of bone mineralization"/>
    <property type="evidence" value="ECO:0007669"/>
    <property type="project" value="Ensembl"/>
</dbReference>
<dbReference type="GO" id="GO:0141163">
    <property type="term" value="P:positive regulation of cAMP/PKA signal transduction"/>
    <property type="evidence" value="ECO:0007669"/>
    <property type="project" value="Ensembl"/>
</dbReference>
<dbReference type="GO" id="GO:0120162">
    <property type="term" value="P:positive regulation of cold-induced thermogenesis"/>
    <property type="evidence" value="ECO:0007669"/>
    <property type="project" value="Ensembl"/>
</dbReference>
<dbReference type="GO" id="GO:1904504">
    <property type="term" value="P:positive regulation of lipophagy"/>
    <property type="evidence" value="ECO:0000250"/>
    <property type="project" value="GO_Central"/>
</dbReference>
<dbReference type="GO" id="GO:0043410">
    <property type="term" value="P:positive regulation of MAPK cascade"/>
    <property type="evidence" value="ECO:0000250"/>
    <property type="project" value="HGNC-UCL"/>
</dbReference>
<dbReference type="GO" id="GO:0061885">
    <property type="term" value="P:positive regulation of mini excitatory postsynaptic potential"/>
    <property type="evidence" value="ECO:0007669"/>
    <property type="project" value="Ensembl"/>
</dbReference>
<dbReference type="GO" id="GO:0045944">
    <property type="term" value="P:positive regulation of transcription by RNA polymerase II"/>
    <property type="evidence" value="ECO:0007669"/>
    <property type="project" value="Ensembl"/>
</dbReference>
<dbReference type="GO" id="GO:0006898">
    <property type="term" value="P:receptor-mediated endocytosis"/>
    <property type="evidence" value="ECO:0000250"/>
    <property type="project" value="HGNC-UCL"/>
</dbReference>
<dbReference type="GO" id="GO:0002028">
    <property type="term" value="P:regulation of sodium ion transport"/>
    <property type="evidence" value="ECO:0007669"/>
    <property type="project" value="Ensembl"/>
</dbReference>
<dbReference type="GO" id="GO:0009409">
    <property type="term" value="P:response to cold"/>
    <property type="evidence" value="ECO:0007669"/>
    <property type="project" value="Ensembl"/>
</dbReference>
<dbReference type="GO" id="GO:0006939">
    <property type="term" value="P:smooth muscle contraction"/>
    <property type="evidence" value="ECO:0007669"/>
    <property type="project" value="Ensembl"/>
</dbReference>
<dbReference type="GO" id="GO:0006366">
    <property type="term" value="P:transcription by RNA polymerase II"/>
    <property type="evidence" value="ECO:0007669"/>
    <property type="project" value="Ensembl"/>
</dbReference>
<dbReference type="CDD" id="cd15957">
    <property type="entry name" value="7tmA_Beta2_AR"/>
    <property type="match status" value="1"/>
</dbReference>
<dbReference type="FunFam" id="1.20.1070.10:FF:000057">
    <property type="entry name" value="Beta-1 adrenergic receptor"/>
    <property type="match status" value="1"/>
</dbReference>
<dbReference type="Gene3D" id="1.20.1070.10">
    <property type="entry name" value="Rhodopsin 7-helix transmembrane proteins"/>
    <property type="match status" value="1"/>
</dbReference>
<dbReference type="InterPro" id="IPR002233">
    <property type="entry name" value="ADR_fam"/>
</dbReference>
<dbReference type="InterPro" id="IPR000332">
    <property type="entry name" value="ADRB2_rcpt"/>
</dbReference>
<dbReference type="InterPro" id="IPR000276">
    <property type="entry name" value="GPCR_Rhodpsn"/>
</dbReference>
<dbReference type="InterPro" id="IPR017452">
    <property type="entry name" value="GPCR_Rhodpsn_7TM"/>
</dbReference>
<dbReference type="PANTHER" id="PTHR24248">
    <property type="entry name" value="ADRENERGIC RECEPTOR-RELATED G-PROTEIN COUPLED RECEPTOR"/>
    <property type="match status" value="1"/>
</dbReference>
<dbReference type="PANTHER" id="PTHR24248:SF21">
    <property type="entry name" value="BETA-2 ADRENERGIC RECEPTOR"/>
    <property type="match status" value="1"/>
</dbReference>
<dbReference type="Pfam" id="PF00001">
    <property type="entry name" value="7tm_1"/>
    <property type="match status" value="1"/>
</dbReference>
<dbReference type="PRINTS" id="PR01103">
    <property type="entry name" value="ADRENERGICR"/>
</dbReference>
<dbReference type="PRINTS" id="PR00562">
    <property type="entry name" value="ADRENRGCB2AR"/>
</dbReference>
<dbReference type="PRINTS" id="PR00237">
    <property type="entry name" value="GPCRRHODOPSN"/>
</dbReference>
<dbReference type="SMART" id="SM01381">
    <property type="entry name" value="7TM_GPCR_Srsx"/>
    <property type="match status" value="1"/>
</dbReference>
<dbReference type="SUPFAM" id="SSF81321">
    <property type="entry name" value="Family A G protein-coupled receptor-like"/>
    <property type="match status" value="1"/>
</dbReference>
<dbReference type="PROSITE" id="PS00237">
    <property type="entry name" value="G_PROTEIN_RECEP_F1_1"/>
    <property type="match status" value="1"/>
</dbReference>
<dbReference type="PROSITE" id="PS50262">
    <property type="entry name" value="G_PROTEIN_RECEP_F1_2"/>
    <property type="match status" value="1"/>
</dbReference>
<proteinExistence type="evidence at transcript level"/>
<keyword id="KW-1003">Cell membrane</keyword>
<keyword id="KW-1015">Disulfide bond</keyword>
<keyword id="KW-0967">Endosome</keyword>
<keyword id="KW-0297">G-protein coupled receptor</keyword>
<keyword id="KW-0325">Glycoprotein</keyword>
<keyword id="KW-0333">Golgi apparatus</keyword>
<keyword id="KW-0379">Hydroxylation</keyword>
<keyword id="KW-0449">Lipoprotein</keyword>
<keyword id="KW-0472">Membrane</keyword>
<keyword id="KW-0564">Palmitate</keyword>
<keyword id="KW-0597">Phosphoprotein</keyword>
<keyword id="KW-0675">Receptor</keyword>
<keyword id="KW-1185">Reference proteome</keyword>
<keyword id="KW-0807">Transducer</keyword>
<keyword id="KW-0812">Transmembrane</keyword>
<keyword id="KW-1133">Transmembrane helix</keyword>
<keyword id="KW-0832">Ubl conjugation</keyword>
<organism>
    <name type="scientific">Bos taurus</name>
    <name type="common">Bovine</name>
    <dbReference type="NCBI Taxonomy" id="9913"/>
    <lineage>
        <taxon>Eukaryota</taxon>
        <taxon>Metazoa</taxon>
        <taxon>Chordata</taxon>
        <taxon>Craniata</taxon>
        <taxon>Vertebrata</taxon>
        <taxon>Euteleostomi</taxon>
        <taxon>Mammalia</taxon>
        <taxon>Eutheria</taxon>
        <taxon>Laurasiatheria</taxon>
        <taxon>Artiodactyla</taxon>
        <taxon>Ruminantia</taxon>
        <taxon>Pecora</taxon>
        <taxon>Bovidae</taxon>
        <taxon>Bovinae</taxon>
        <taxon>Bos</taxon>
    </lineage>
</organism>
<comment type="function">
    <text evidence="2">Beta-adrenergic receptors mediate the catecholamine-induced activation of adenylate cyclase through the action of G proteins. The beta-2-adrenergic receptor binds epinephrine with an approximately 30-fold greater affinity than it does norepinephrine (By similarity).</text>
</comment>
<comment type="subunit">
    <text evidence="2">Binds NHERF1 and GPRASP1. Interacts with ARRB1 and ARRB2. Interacts with SRC (By similarity). Interacts with USP20 and USP33 (By similarity). Interacts with VHL; the interaction, which is increased on hydroxylation of ADRB2, ubiquitinates ADRB2 leading to its degradation. Interacts with EGLN3; the interaction hydroxylates ADRB2 facilitating VHL-E3 ligase-mediated ubiquitination. Interacts (via PDZ-binding motif) with SNX27 (via PDZ domain); the interaction is required when endocytosed to prevent degradation in lysosomes and promote recycling to the plasma membrane. Interacts with CNIH4. Interacts with ARRDC3. Interacts with NEDD4 (By similarity). Interacts with MARCHF2 (By similarity).</text>
</comment>
<comment type="subcellular location">
    <subcellularLocation>
        <location evidence="2">Cell membrane</location>
        <topology evidence="2">Multi-pass membrane protein</topology>
    </subcellularLocation>
    <subcellularLocation>
        <location evidence="2">Early endosome</location>
    </subcellularLocation>
    <subcellularLocation>
        <location evidence="2">Golgi apparatus</location>
    </subcellularLocation>
    <text evidence="2">Colocalizes with VHL at the cell membrane. Activated receptors are internalized into endosomes prior to their degradation in lysosomes. Activated receptors are also detected within the Golgi apparatus.</text>
</comment>
<comment type="tissue specificity">
    <text evidence="6">Expressed in oviduct epithelial cells with high levels during the luteal phase of the sexual cycle. Lower levels around ovulation. Also expressed in liver.</text>
</comment>
<comment type="induction">
    <text evidence="6">50% increase with progesterone treatment in cultured oviduct epithelial cells.</text>
</comment>
<comment type="PTM">
    <text evidence="1">Palmitoylated (By similarity); may reduce accessibility of Ser-345 and Ser-346 by anchoring Cys-341 to the plasma membrane. Agonist stimulation promotes depalmitoylation and further allows Ser-345 and Ser-346 phosphorylation (By similarity).</text>
</comment>
<comment type="PTM">
    <text>Phosphorylated by PKA and BARK upon agonist stimulation, which mediates homologous desensitization of the receptor. PKA-mediated phosphorylation seems to facilitate phosphorylation by BARK.</text>
</comment>
<comment type="PTM">
    <text evidence="1">Phosphorylation of Tyr-141 is induced by insulin and leads to supersensitization of the receptor.</text>
</comment>
<comment type="PTM">
    <text evidence="1">Polyubiquitinated. Agonist-induced ubiquitination leads to sort internalized receptors to the lysosomes for degradation. Deubiquitination by USP20 and USP33, leads to ADRB2 recycling and resensitization after prolonged agonist stimulation. USP20 and USP33 are constitutively associated and are dissociated immediately after agonist stimulation. Ubiquitination by the VHL-E3 ligase complex is oxygen-dependent (By similarity).</text>
</comment>
<comment type="PTM">
    <text evidence="1">Hydroxylation by EGLN3 occurs only under normoxia and increases the interaction with VHL and the subsequent ubiquitination and degradation of ADRB2.</text>
</comment>
<comment type="PTM">
    <text evidence="2">Palmitoylated. Mainly palmitoylated at Cys-341. Palmitoylation may reduce accessibility of phosphorylation sites by anchoring the receptor to the plasma membrane. Agonist stimulation promotes depalmitoylation and further allows Ser-345 and Ser-346 phosphorylation. Could be depalmitoylated by LYPLA1 at the plasma membrane.</text>
</comment>
<comment type="similarity">
    <text evidence="4">Belongs to the G-protein coupled receptor 1 family. Adrenergic receptor subfamily. ADRB2 sub-subfamily.</text>
</comment>
<name>ADRB2_BOVIN</name>